<evidence type="ECO:0000250" key="1"/>
<evidence type="ECO:0000250" key="2">
    <source>
        <dbReference type="UniProtKB" id="P62805"/>
    </source>
</evidence>
<evidence type="ECO:0000256" key="3">
    <source>
        <dbReference type="SAM" id="MobiDB-lite"/>
    </source>
</evidence>
<evidence type="ECO:0000305" key="4"/>
<reference key="1">
    <citation type="journal article" date="1984" name="J. Mol. Biol.">
        <title>Sequence comparisons of non-allelic late histone genes and their early stage counterparts. Evidence for gene conversion within the sea urchin late stage gene family.</title>
        <authorList>
            <person name="Roberts S.B."/>
            <person name="Weisser K.E."/>
            <person name="Childs G.J."/>
        </authorList>
    </citation>
    <scope>NUCLEOTIDE SEQUENCE [GENOMIC DNA]</scope>
</reference>
<reference key="2">
    <citation type="journal article" date="1982" name="Cell">
        <title>Sea urchin (Lytechinus pictus) late-stage histone H3 and H4 genes: characterization and mapping of a clustered but nontandemly linked multigene family.</title>
        <authorList>
            <person name="Childs G.J."/>
            <person name="Nocente-Mcgrath C."/>
            <person name="Lieber T."/>
            <person name="Holt C."/>
            <person name="Knowles J.A."/>
        </authorList>
    </citation>
    <scope>NUCLEOTIDE SEQUENCE [GENOMIC DNA]</scope>
</reference>
<protein>
    <recommendedName>
        <fullName>Histone H4</fullName>
    </recommendedName>
</protein>
<dbReference type="EMBL" id="X00593">
    <property type="protein sequence ID" value="CAA25241.1"/>
    <property type="molecule type" value="Genomic_DNA"/>
</dbReference>
<dbReference type="EMBL" id="J01175">
    <property type="protein sequence ID" value="AAA30002.1"/>
    <property type="molecule type" value="Genomic_DNA"/>
</dbReference>
<dbReference type="RefSeq" id="XP_054754177.1">
    <property type="nucleotide sequence ID" value="XM_054898202.2"/>
</dbReference>
<dbReference type="RefSeq" id="XP_054763328.1">
    <property type="nucleotide sequence ID" value="XM_054907353.2"/>
</dbReference>
<dbReference type="RefSeq" id="XP_063970681.1">
    <property type="nucleotide sequence ID" value="XM_064114611.1"/>
</dbReference>
<dbReference type="SMR" id="P62782"/>
<dbReference type="EnsemblMetazoa" id="XM_054898202.1">
    <property type="protein sequence ID" value="XP_054754177.1"/>
    <property type="gene ID" value="LOC129260168"/>
</dbReference>
<dbReference type="EnsemblMetazoa" id="XM_054898737.1">
    <property type="protein sequence ID" value="XP_054754712.1"/>
    <property type="gene ID" value="LOC129260767"/>
</dbReference>
<dbReference type="EnsemblMetazoa" id="XM_054899309.1">
    <property type="protein sequence ID" value="XP_054755284.1"/>
    <property type="gene ID" value="LOC129261252"/>
</dbReference>
<dbReference type="EnsemblMetazoa" id="XM_054900642.1">
    <property type="protein sequence ID" value="XP_054756617.1"/>
    <property type="gene ID" value="LOC129262512"/>
</dbReference>
<dbReference type="EnsemblMetazoa" id="XM_054905907.1">
    <property type="protein sequence ID" value="XP_054761882.1"/>
    <property type="gene ID" value="LOC129268352"/>
</dbReference>
<dbReference type="EnsemblMetazoa" id="XM_054905908.1">
    <property type="protein sequence ID" value="XP_054761883.1"/>
    <property type="gene ID" value="LOC129268353"/>
</dbReference>
<dbReference type="EnsemblMetazoa" id="XM_054905909.1">
    <property type="protein sequence ID" value="XP_054761884.1"/>
    <property type="gene ID" value="LOC129268354"/>
</dbReference>
<dbReference type="EnsemblMetazoa" id="XM_054905910.1">
    <property type="protein sequence ID" value="XP_054761885.1"/>
    <property type="gene ID" value="LOC129268355"/>
</dbReference>
<dbReference type="EnsemblMetazoa" id="XM_054907353.1">
    <property type="protein sequence ID" value="XP_054763328.1"/>
    <property type="gene ID" value="LOC129269897"/>
</dbReference>
<dbReference type="EnsemblMetazoa" id="XM_054918146.1">
    <property type="protein sequence ID" value="XP_054774121.1"/>
    <property type="gene ID" value="LOC129282218"/>
</dbReference>
<dbReference type="EnsemblMetazoa" id="XM_054919291.1">
    <property type="protein sequence ID" value="XP_054775266.1"/>
    <property type="gene ID" value="LOC129283508"/>
</dbReference>
<dbReference type="EnsemblMetazoa" id="XM_054919472.1">
    <property type="protein sequence ID" value="XP_054775447.1"/>
    <property type="gene ID" value="LOC129283872"/>
</dbReference>
<dbReference type="EnsemblMetazoa" id="XM_054919473.1">
    <property type="protein sequence ID" value="XP_054775448.1"/>
    <property type="gene ID" value="LOC129283873"/>
</dbReference>
<dbReference type="GeneID" id="129260168"/>
<dbReference type="GeneID" id="129260767"/>
<dbReference type="GeneID" id="129269897"/>
<dbReference type="OrthoDB" id="5918951at2759"/>
<dbReference type="GO" id="GO:0000786">
    <property type="term" value="C:nucleosome"/>
    <property type="evidence" value="ECO:0007669"/>
    <property type="project" value="UniProtKB-KW"/>
</dbReference>
<dbReference type="GO" id="GO:0005634">
    <property type="term" value="C:nucleus"/>
    <property type="evidence" value="ECO:0007669"/>
    <property type="project" value="UniProtKB-SubCell"/>
</dbReference>
<dbReference type="GO" id="GO:0003677">
    <property type="term" value="F:DNA binding"/>
    <property type="evidence" value="ECO:0007669"/>
    <property type="project" value="UniProtKB-KW"/>
</dbReference>
<dbReference type="GO" id="GO:0046982">
    <property type="term" value="F:protein heterodimerization activity"/>
    <property type="evidence" value="ECO:0007669"/>
    <property type="project" value="InterPro"/>
</dbReference>
<dbReference type="GO" id="GO:0030527">
    <property type="term" value="F:structural constituent of chromatin"/>
    <property type="evidence" value="ECO:0007669"/>
    <property type="project" value="InterPro"/>
</dbReference>
<dbReference type="CDD" id="cd22912">
    <property type="entry name" value="HFD_H4"/>
    <property type="match status" value="1"/>
</dbReference>
<dbReference type="FunFam" id="1.10.20.10:FF:000002">
    <property type="entry name" value="Histone H4"/>
    <property type="match status" value="1"/>
</dbReference>
<dbReference type="Gene3D" id="1.10.20.10">
    <property type="entry name" value="Histone, subunit A"/>
    <property type="match status" value="1"/>
</dbReference>
<dbReference type="InterPro" id="IPR035425">
    <property type="entry name" value="CENP-T/H4_C"/>
</dbReference>
<dbReference type="InterPro" id="IPR009072">
    <property type="entry name" value="Histone-fold"/>
</dbReference>
<dbReference type="InterPro" id="IPR001951">
    <property type="entry name" value="Histone_H4"/>
</dbReference>
<dbReference type="InterPro" id="IPR019809">
    <property type="entry name" value="Histone_H4_CS"/>
</dbReference>
<dbReference type="PANTHER" id="PTHR10484">
    <property type="entry name" value="HISTONE H4"/>
    <property type="match status" value="1"/>
</dbReference>
<dbReference type="Pfam" id="PF15511">
    <property type="entry name" value="CENP-T_C"/>
    <property type="match status" value="1"/>
</dbReference>
<dbReference type="PRINTS" id="PR00623">
    <property type="entry name" value="HISTONEH4"/>
</dbReference>
<dbReference type="SMART" id="SM00417">
    <property type="entry name" value="H4"/>
    <property type="match status" value="1"/>
</dbReference>
<dbReference type="SUPFAM" id="SSF47113">
    <property type="entry name" value="Histone-fold"/>
    <property type="match status" value="1"/>
</dbReference>
<dbReference type="PROSITE" id="PS00047">
    <property type="entry name" value="HISTONE_H4"/>
    <property type="match status" value="1"/>
</dbReference>
<name>H4_LYTPI</name>
<proteinExistence type="inferred from homology"/>
<keyword id="KW-0007">Acetylation</keyword>
<keyword id="KW-0158">Chromosome</keyword>
<keyword id="KW-0238">DNA-binding</keyword>
<keyword id="KW-0488">Methylation</keyword>
<keyword id="KW-0544">Nucleosome core</keyword>
<keyword id="KW-0539">Nucleus</keyword>
<sequence>MSGRGKGGKGLGKGGAKRHRKVLRDNIQGITKPAIRRLARRGGVKRISGLIYEETRGVLKVFLENVIRDAVTYCEHAKRKTVTAMDVVYALKRQGRTLYGFGG</sequence>
<feature type="initiator methionine" description="Removed" evidence="1">
    <location>
        <position position="1"/>
    </location>
</feature>
<feature type="chain" id="PRO_0000158323" description="Histone H4">
    <location>
        <begin position="2"/>
        <end position="103"/>
    </location>
</feature>
<feature type="DNA-binding region">
    <location>
        <begin position="17"/>
        <end position="21"/>
    </location>
</feature>
<feature type="region of interest" description="Disordered" evidence="3">
    <location>
        <begin position="1"/>
        <end position="20"/>
    </location>
</feature>
<feature type="compositionally biased region" description="Gly residues" evidence="3">
    <location>
        <begin position="1"/>
        <end position="14"/>
    </location>
</feature>
<feature type="modified residue" description="N-acetylserine" evidence="1">
    <location>
        <position position="2"/>
    </location>
</feature>
<feature type="modified residue" description="N6-acetyl-N6-methyllysine; alternate" evidence="2">
    <location>
        <position position="6"/>
    </location>
</feature>
<feature type="modified residue" description="N6-acetyl-N6-methyllysine; alternate" evidence="2">
    <location>
        <position position="13"/>
    </location>
</feature>
<feature type="modified residue" description="N6-acetyllysine" evidence="1">
    <location>
        <position position="17"/>
    </location>
</feature>
<feature type="modified residue" description="N6-methyllysine" evidence="1">
    <location>
        <position position="21"/>
    </location>
</feature>
<accession>P62782</accession>
<accession>P02306</accession>
<accession>P18678</accession>
<comment type="function">
    <text>Core component of nucleosome. Nucleosomes wrap and compact DNA into chromatin, limiting DNA accessibility to the cellular machineries which require DNA as a template. Histones thereby play a central role in transcription regulation, DNA repair, DNA replication and chromosomal stability. DNA accessibility is regulated via a complex set of post-translational modifications of histones, also called histone code, and nucleosome remodeling.</text>
</comment>
<comment type="subunit">
    <text>The nucleosome is a histone octamer containing two molecules each of H2A, H2B, H3 and H4 assembled in one H3-H4 heterotetramer and two H2A-H2B heterodimers. The octamer wraps approximately 147 bp of DNA.</text>
</comment>
<comment type="subcellular location">
    <subcellularLocation>
        <location evidence="1">Nucleus</location>
    </subcellularLocation>
    <subcellularLocation>
        <location evidence="1">Chromosome</location>
    </subcellularLocation>
</comment>
<comment type="similarity">
    <text evidence="4">Belongs to the histone H4 family.</text>
</comment>
<organism>
    <name type="scientific">Lytechinus pictus</name>
    <name type="common">Painted sea urchin</name>
    <dbReference type="NCBI Taxonomy" id="7653"/>
    <lineage>
        <taxon>Eukaryota</taxon>
        <taxon>Metazoa</taxon>
        <taxon>Echinodermata</taxon>
        <taxon>Eleutherozoa</taxon>
        <taxon>Echinozoa</taxon>
        <taxon>Echinoidea</taxon>
        <taxon>Euechinoidea</taxon>
        <taxon>Echinacea</taxon>
        <taxon>Temnopleuroida</taxon>
        <taxon>Toxopneustidae</taxon>
        <taxon>Lytechinus</taxon>
    </lineage>
</organism>